<protein>
    <recommendedName>
        <fullName evidence="1">Eukaryotic translation initiation factor 3 subunit L</fullName>
        <shortName evidence="1">eIF3l</shortName>
    </recommendedName>
</protein>
<feature type="chain" id="PRO_0000364237" description="Eukaryotic translation initiation factor 3 subunit L">
    <location>
        <begin position="1"/>
        <end position="537"/>
    </location>
</feature>
<feature type="domain" description="PCI" evidence="2">
    <location>
        <begin position="297"/>
        <end position="485"/>
    </location>
</feature>
<feature type="region of interest" description="Disordered" evidence="3">
    <location>
        <begin position="1"/>
        <end position="28"/>
    </location>
</feature>
<feature type="compositionally biased region" description="Basic and acidic residues" evidence="3">
    <location>
        <begin position="1"/>
        <end position="19"/>
    </location>
</feature>
<keyword id="KW-0963">Cytoplasm</keyword>
<keyword id="KW-0396">Initiation factor</keyword>
<keyword id="KW-0648">Protein biosynthesis</keyword>
<keyword id="KW-1185">Reference proteome</keyword>
<proteinExistence type="inferred from homology"/>
<evidence type="ECO:0000255" key="1">
    <source>
        <dbReference type="HAMAP-Rule" id="MF_03011"/>
    </source>
</evidence>
<evidence type="ECO:0000255" key="2">
    <source>
        <dbReference type="PROSITE-ProRule" id="PRU01185"/>
    </source>
</evidence>
<evidence type="ECO:0000256" key="3">
    <source>
        <dbReference type="SAM" id="MobiDB-lite"/>
    </source>
</evidence>
<evidence type="ECO:0000312" key="4">
    <source>
        <dbReference type="WormBase" id="CBG06959"/>
    </source>
</evidence>
<dbReference type="EMBL" id="HE600960">
    <property type="protein sequence ID" value="CAP27379.1"/>
    <property type="molecule type" value="Genomic_DNA"/>
</dbReference>
<dbReference type="RefSeq" id="XP_002632106.1">
    <property type="nucleotide sequence ID" value="XM_002632060.1"/>
</dbReference>
<dbReference type="SMR" id="A8X419"/>
<dbReference type="FunCoup" id="A8X419">
    <property type="interactions" value="2407"/>
</dbReference>
<dbReference type="STRING" id="6238.A8X419"/>
<dbReference type="EnsemblMetazoa" id="CBG06959.1">
    <property type="protein sequence ID" value="CBG06959.1"/>
    <property type="gene ID" value="WBGene00029140"/>
</dbReference>
<dbReference type="GeneID" id="8574104"/>
<dbReference type="KEGG" id="cbr:CBG_06959"/>
<dbReference type="CTD" id="8574104"/>
<dbReference type="WormBase" id="CBG06959">
    <property type="protein sequence ID" value="CBP15837"/>
    <property type="gene ID" value="WBGene00029140"/>
    <property type="gene designation" value="Cbr-eif-3.L"/>
</dbReference>
<dbReference type="eggNOG" id="KOG3677">
    <property type="taxonomic scope" value="Eukaryota"/>
</dbReference>
<dbReference type="HOGENOM" id="CLU_029210_1_0_1"/>
<dbReference type="InParanoid" id="A8X419"/>
<dbReference type="OMA" id="AGWFIRN"/>
<dbReference type="OrthoDB" id="15082at2759"/>
<dbReference type="Proteomes" id="UP000008549">
    <property type="component" value="Unassembled WGS sequence"/>
</dbReference>
<dbReference type="GO" id="GO:0016282">
    <property type="term" value="C:eukaryotic 43S preinitiation complex"/>
    <property type="evidence" value="ECO:0007669"/>
    <property type="project" value="UniProtKB-UniRule"/>
</dbReference>
<dbReference type="GO" id="GO:0033290">
    <property type="term" value="C:eukaryotic 48S preinitiation complex"/>
    <property type="evidence" value="ECO:0007669"/>
    <property type="project" value="UniProtKB-UniRule"/>
</dbReference>
<dbReference type="GO" id="GO:0005852">
    <property type="term" value="C:eukaryotic translation initiation factor 3 complex"/>
    <property type="evidence" value="ECO:0000318"/>
    <property type="project" value="GO_Central"/>
</dbReference>
<dbReference type="GO" id="GO:0003743">
    <property type="term" value="F:translation initiation factor activity"/>
    <property type="evidence" value="ECO:0007669"/>
    <property type="project" value="UniProtKB-UniRule"/>
</dbReference>
<dbReference type="GO" id="GO:0001732">
    <property type="term" value="P:formation of cytoplasmic translation initiation complex"/>
    <property type="evidence" value="ECO:0007669"/>
    <property type="project" value="UniProtKB-UniRule"/>
</dbReference>
<dbReference type="GO" id="GO:0006413">
    <property type="term" value="P:translational initiation"/>
    <property type="evidence" value="ECO:0000318"/>
    <property type="project" value="GO_Central"/>
</dbReference>
<dbReference type="HAMAP" id="MF_03011">
    <property type="entry name" value="eIF3l"/>
    <property type="match status" value="1"/>
</dbReference>
<dbReference type="InterPro" id="IPR019382">
    <property type="entry name" value="eIF3l"/>
</dbReference>
<dbReference type="InterPro" id="IPR000717">
    <property type="entry name" value="PCI_dom"/>
</dbReference>
<dbReference type="PANTHER" id="PTHR13242">
    <property type="entry name" value="EUKARYOTIC TRANSLATION INITIATION FACTOR 3"/>
    <property type="match status" value="1"/>
</dbReference>
<dbReference type="PANTHER" id="PTHR13242:SF0">
    <property type="entry name" value="EUKARYOTIC TRANSLATION INITIATION FACTOR 3 SUBUNIT L"/>
    <property type="match status" value="1"/>
</dbReference>
<dbReference type="Pfam" id="PF10255">
    <property type="entry name" value="Paf67"/>
    <property type="match status" value="1"/>
</dbReference>
<dbReference type="PROSITE" id="PS50250">
    <property type="entry name" value="PCI"/>
    <property type="match status" value="1"/>
</dbReference>
<reference key="1">
    <citation type="journal article" date="2003" name="PLoS Biol.">
        <title>The genome sequence of Caenorhabditis briggsae: a platform for comparative genomics.</title>
        <authorList>
            <person name="Stein L.D."/>
            <person name="Bao Z."/>
            <person name="Blasiar D."/>
            <person name="Blumenthal T."/>
            <person name="Brent M.R."/>
            <person name="Chen N."/>
            <person name="Chinwalla A."/>
            <person name="Clarke L."/>
            <person name="Clee C."/>
            <person name="Coghlan A."/>
            <person name="Coulson A."/>
            <person name="D'Eustachio P."/>
            <person name="Fitch D.H.A."/>
            <person name="Fulton L.A."/>
            <person name="Fulton R.E."/>
            <person name="Griffiths-Jones S."/>
            <person name="Harris T.W."/>
            <person name="Hillier L.W."/>
            <person name="Kamath R."/>
            <person name="Kuwabara P.E."/>
            <person name="Mardis E.R."/>
            <person name="Marra M.A."/>
            <person name="Miner T.L."/>
            <person name="Minx P."/>
            <person name="Mullikin J.C."/>
            <person name="Plumb R.W."/>
            <person name="Rogers J."/>
            <person name="Schein J.E."/>
            <person name="Sohrmann M."/>
            <person name="Spieth J."/>
            <person name="Stajich J.E."/>
            <person name="Wei C."/>
            <person name="Willey D."/>
            <person name="Wilson R.K."/>
            <person name="Durbin R.M."/>
            <person name="Waterston R.H."/>
        </authorList>
    </citation>
    <scope>NUCLEOTIDE SEQUENCE [LARGE SCALE GENOMIC DNA]</scope>
    <source>
        <strain>AF16</strain>
    </source>
</reference>
<gene>
    <name evidence="1" type="primary">eif-3.L</name>
    <name evidence="4" type="ORF">CBG06959</name>
</gene>
<accession>A8X419</accession>
<name>EIF3L_CAEBR</name>
<comment type="function">
    <text evidence="1">Component of the eukaryotic translation initiation factor 3 (eIF-3) complex, which is involved in protein synthesis of a specialized repertoire of mRNAs and, together with other initiation factors, stimulates binding of mRNA and methionyl-tRNAi to the 40S ribosome. The eIF-3 complex specifically targets and initiates translation of a subset of mRNAs involved in cell proliferation.</text>
</comment>
<comment type="subunit">
    <text evidence="1">Component of the eukaryotic translation initiation factor 3 (eIF-3) complex.</text>
</comment>
<comment type="subcellular location">
    <subcellularLocation>
        <location evidence="1">Cytoplasm</location>
    </subcellularLocation>
</comment>
<comment type="similarity">
    <text evidence="1">Belongs to the eIF-3 subunit L family.</text>
</comment>
<sequence length="537" mass="62504">MSRRVEFDMSHEDHTDRRRTNTFSSEEDGVPNEVADYLVYFSRMIDEQNVPEILTLYDQAFPDLTERFFRDRMWPDENVVERIIGPGNKLFIILYKELYYRQLYARNARGPLLVHRYESFMNYQELFSELLSSKDPIPLSLPNVWLWDIIDEFVYQFQAFCLYKANPGKRNADEVEDLINIEENQNAWNIYPVLNILYSLLSKSQIVEQLKALKEKRNPDSVADEFGQSDLYFKLGYFALIGLLRTHVLLGDYHQALKTVQYVDIDPKGIYNTVPTCLVTLHYFVGFSHLMMRNYGEATKMFVNCLLYIQRTKTVQSQQPSKKNFQYDVIGKTWDQLFYLLAICLAVQPQRIDESIASQLAERCGERMMHMANGNVDEFRNAFSTGCPKFLSPTTVVYEGVNQSKEPLLRQTQSFLEGIESQMALPVLRGYLKLYTTLPTKKLASFMDVDEENYDSFLGKLLTYKMIVNELGKEAGPSTVDDDEPQTDIDFYVDRDMINIADTKVARHVGEHFLRHIQKLQEVQDVLKRLDSAGQKP</sequence>
<organism>
    <name type="scientific">Caenorhabditis briggsae</name>
    <dbReference type="NCBI Taxonomy" id="6238"/>
    <lineage>
        <taxon>Eukaryota</taxon>
        <taxon>Metazoa</taxon>
        <taxon>Ecdysozoa</taxon>
        <taxon>Nematoda</taxon>
        <taxon>Chromadorea</taxon>
        <taxon>Rhabditida</taxon>
        <taxon>Rhabditina</taxon>
        <taxon>Rhabditomorpha</taxon>
        <taxon>Rhabditoidea</taxon>
        <taxon>Rhabditidae</taxon>
        <taxon>Peloderinae</taxon>
        <taxon>Caenorhabditis</taxon>
    </lineage>
</organism>